<proteinExistence type="inferred from homology"/>
<sequence length="306" mass="33571">MSTLGHQYDNSLVSNAFGFLRLPMNFQPYDSDADWVITGVPFDMATSGRAGGRHGPAAIRQVSTNLAWEHNRFPWNFDMRERLNVVDCGDLVYAFGDAREMSEKLQAHAEKLLAAGKRMLSFGGDHFVTLPLLRAHAKHFGKMALVHFDAHTDTYANGCEFDHGTMFYTAPKEGLIDPNHSVQIGIRTEFDKDNGFTVLDACQVNDRSVDDIIAQVKQIVGDMPVYLTFDIDCLDPAFAPGTGTPVIGGLTSDRAIKLVRGLKDLNIVGMDVVEVAPAYDQSEITALAAATLALEMLYIQAAKKGE</sequence>
<reference key="1">
    <citation type="journal article" date="2009" name="PLoS Genet.">
        <title>Organised genome dynamics in the Escherichia coli species results in highly diverse adaptive paths.</title>
        <authorList>
            <person name="Touchon M."/>
            <person name="Hoede C."/>
            <person name="Tenaillon O."/>
            <person name="Barbe V."/>
            <person name="Baeriswyl S."/>
            <person name="Bidet P."/>
            <person name="Bingen E."/>
            <person name="Bonacorsi S."/>
            <person name="Bouchier C."/>
            <person name="Bouvet O."/>
            <person name="Calteau A."/>
            <person name="Chiapello H."/>
            <person name="Clermont O."/>
            <person name="Cruveiller S."/>
            <person name="Danchin A."/>
            <person name="Diard M."/>
            <person name="Dossat C."/>
            <person name="Karoui M.E."/>
            <person name="Frapy E."/>
            <person name="Garry L."/>
            <person name="Ghigo J.M."/>
            <person name="Gilles A.M."/>
            <person name="Johnson J."/>
            <person name="Le Bouguenec C."/>
            <person name="Lescat M."/>
            <person name="Mangenot S."/>
            <person name="Martinez-Jehanne V."/>
            <person name="Matic I."/>
            <person name="Nassif X."/>
            <person name="Oztas S."/>
            <person name="Petit M.A."/>
            <person name="Pichon C."/>
            <person name="Rouy Z."/>
            <person name="Ruf C.S."/>
            <person name="Schneider D."/>
            <person name="Tourret J."/>
            <person name="Vacherie B."/>
            <person name="Vallenet D."/>
            <person name="Medigue C."/>
            <person name="Rocha E.P.C."/>
            <person name="Denamur E."/>
        </authorList>
    </citation>
    <scope>NUCLEOTIDE SEQUENCE [LARGE SCALE GENOMIC DNA]</scope>
    <source>
        <strain>S88 / ExPEC</strain>
    </source>
</reference>
<feature type="chain" id="PRO_1000145607" description="Agmatinase">
    <location>
        <begin position="1"/>
        <end position="306"/>
    </location>
</feature>
<feature type="binding site" evidence="1">
    <location>
        <position position="126"/>
    </location>
    <ligand>
        <name>Mn(2+)</name>
        <dbReference type="ChEBI" id="CHEBI:29035"/>
    </ligand>
</feature>
<feature type="binding site" evidence="1">
    <location>
        <position position="149"/>
    </location>
    <ligand>
        <name>Mn(2+)</name>
        <dbReference type="ChEBI" id="CHEBI:29035"/>
    </ligand>
</feature>
<feature type="binding site" evidence="1">
    <location>
        <position position="151"/>
    </location>
    <ligand>
        <name>Mn(2+)</name>
        <dbReference type="ChEBI" id="CHEBI:29035"/>
    </ligand>
</feature>
<feature type="binding site" evidence="1">
    <location>
        <position position="153"/>
    </location>
    <ligand>
        <name>Mn(2+)</name>
        <dbReference type="ChEBI" id="CHEBI:29035"/>
    </ligand>
</feature>
<feature type="binding site" evidence="1">
    <location>
        <position position="230"/>
    </location>
    <ligand>
        <name>Mn(2+)</name>
        <dbReference type="ChEBI" id="CHEBI:29035"/>
    </ligand>
</feature>
<feature type="binding site" evidence="1">
    <location>
        <position position="232"/>
    </location>
    <ligand>
        <name>Mn(2+)</name>
        <dbReference type="ChEBI" id="CHEBI:29035"/>
    </ligand>
</feature>
<protein>
    <recommendedName>
        <fullName evidence="1">Agmatinase</fullName>
        <ecNumber evidence="1">3.5.3.11</ecNumber>
    </recommendedName>
    <alternativeName>
        <fullName evidence="1">Agmatine ureohydrolase</fullName>
        <shortName evidence="1">AUH</shortName>
    </alternativeName>
</protein>
<keyword id="KW-0378">Hydrolase</keyword>
<keyword id="KW-0464">Manganese</keyword>
<keyword id="KW-0479">Metal-binding</keyword>
<keyword id="KW-0620">Polyamine biosynthesis</keyword>
<keyword id="KW-0661">Putrescine biosynthesis</keyword>
<keyword id="KW-1185">Reference proteome</keyword>
<keyword id="KW-0745">Spermidine biosynthesis</keyword>
<comment type="function">
    <text evidence="1">Catalyzes the formation of putrescine from agmatine.</text>
</comment>
<comment type="catalytic activity">
    <reaction evidence="1">
        <text>agmatine + H2O = urea + putrescine</text>
        <dbReference type="Rhea" id="RHEA:13929"/>
        <dbReference type="ChEBI" id="CHEBI:15377"/>
        <dbReference type="ChEBI" id="CHEBI:16199"/>
        <dbReference type="ChEBI" id="CHEBI:58145"/>
        <dbReference type="ChEBI" id="CHEBI:326268"/>
        <dbReference type="EC" id="3.5.3.11"/>
    </reaction>
</comment>
<comment type="cofactor">
    <cofactor evidence="1">
        <name>Mn(2+)</name>
        <dbReference type="ChEBI" id="CHEBI:29035"/>
    </cofactor>
</comment>
<comment type="pathway">
    <text evidence="1">Amine and polyamine biosynthesis; putrescine biosynthesis via agmatine pathway; putrescine from agmatine: step 1/1.</text>
</comment>
<comment type="similarity">
    <text evidence="1">Belongs to the arginase family. Agmatinase subfamily.</text>
</comment>
<dbReference type="EC" id="3.5.3.11" evidence="1"/>
<dbReference type="EMBL" id="CU928161">
    <property type="protein sequence ID" value="CAR04454.1"/>
    <property type="molecule type" value="Genomic_DNA"/>
</dbReference>
<dbReference type="RefSeq" id="WP_000105562.1">
    <property type="nucleotide sequence ID" value="NC_011742.1"/>
</dbReference>
<dbReference type="SMR" id="B7MMC5"/>
<dbReference type="KEGG" id="ecz:ECS88_3219"/>
<dbReference type="HOGENOM" id="CLU_039478_0_0_6"/>
<dbReference type="UniPathway" id="UPA00534">
    <property type="reaction ID" value="UER00287"/>
</dbReference>
<dbReference type="Proteomes" id="UP000000747">
    <property type="component" value="Chromosome"/>
</dbReference>
<dbReference type="GO" id="GO:0008783">
    <property type="term" value="F:agmatinase activity"/>
    <property type="evidence" value="ECO:0007669"/>
    <property type="project" value="UniProtKB-UniRule"/>
</dbReference>
<dbReference type="GO" id="GO:0030145">
    <property type="term" value="F:manganese ion binding"/>
    <property type="evidence" value="ECO:0007669"/>
    <property type="project" value="InterPro"/>
</dbReference>
<dbReference type="GO" id="GO:0033389">
    <property type="term" value="P:putrescine biosynthetic process from arginine, via agmatine"/>
    <property type="evidence" value="ECO:0007669"/>
    <property type="project" value="TreeGrafter"/>
</dbReference>
<dbReference type="GO" id="GO:0008295">
    <property type="term" value="P:spermidine biosynthetic process"/>
    <property type="evidence" value="ECO:0007669"/>
    <property type="project" value="UniProtKB-UniRule"/>
</dbReference>
<dbReference type="CDD" id="cd11592">
    <property type="entry name" value="Agmatinase_PAH"/>
    <property type="match status" value="1"/>
</dbReference>
<dbReference type="FunFam" id="3.40.800.10:FF:000001">
    <property type="entry name" value="Agmatinase"/>
    <property type="match status" value="1"/>
</dbReference>
<dbReference type="Gene3D" id="3.40.800.10">
    <property type="entry name" value="Ureohydrolase domain"/>
    <property type="match status" value="1"/>
</dbReference>
<dbReference type="HAMAP" id="MF_01418">
    <property type="entry name" value="SpeB"/>
    <property type="match status" value="1"/>
</dbReference>
<dbReference type="InterPro" id="IPR023694">
    <property type="entry name" value="Agmatinase"/>
</dbReference>
<dbReference type="InterPro" id="IPR005925">
    <property type="entry name" value="Agmatinase-rel"/>
</dbReference>
<dbReference type="InterPro" id="IPR006035">
    <property type="entry name" value="Ureohydrolase"/>
</dbReference>
<dbReference type="InterPro" id="IPR023696">
    <property type="entry name" value="Ureohydrolase_dom_sf"/>
</dbReference>
<dbReference type="InterPro" id="IPR020855">
    <property type="entry name" value="Ureohydrolase_Mn_BS"/>
</dbReference>
<dbReference type="NCBIfam" id="TIGR01230">
    <property type="entry name" value="agmatinase"/>
    <property type="match status" value="1"/>
</dbReference>
<dbReference type="NCBIfam" id="NF002564">
    <property type="entry name" value="PRK02190.1"/>
    <property type="match status" value="1"/>
</dbReference>
<dbReference type="PANTHER" id="PTHR11358">
    <property type="entry name" value="ARGINASE/AGMATINASE"/>
    <property type="match status" value="1"/>
</dbReference>
<dbReference type="PANTHER" id="PTHR11358:SF26">
    <property type="entry name" value="GUANIDINO ACID HYDROLASE, MITOCHONDRIAL"/>
    <property type="match status" value="1"/>
</dbReference>
<dbReference type="Pfam" id="PF00491">
    <property type="entry name" value="Arginase"/>
    <property type="match status" value="1"/>
</dbReference>
<dbReference type="PIRSF" id="PIRSF036979">
    <property type="entry name" value="Arginase"/>
    <property type="match status" value="1"/>
</dbReference>
<dbReference type="SUPFAM" id="SSF52768">
    <property type="entry name" value="Arginase/deacetylase"/>
    <property type="match status" value="1"/>
</dbReference>
<dbReference type="PROSITE" id="PS01053">
    <property type="entry name" value="ARGINASE_1"/>
    <property type="match status" value="1"/>
</dbReference>
<dbReference type="PROSITE" id="PS51409">
    <property type="entry name" value="ARGINASE_2"/>
    <property type="match status" value="1"/>
</dbReference>
<evidence type="ECO:0000255" key="1">
    <source>
        <dbReference type="HAMAP-Rule" id="MF_01418"/>
    </source>
</evidence>
<name>SPEB_ECO45</name>
<gene>
    <name evidence="1" type="primary">speB</name>
    <name type="ordered locus">ECS88_3219</name>
</gene>
<accession>B7MMC5</accession>
<organism>
    <name type="scientific">Escherichia coli O45:K1 (strain S88 / ExPEC)</name>
    <dbReference type="NCBI Taxonomy" id="585035"/>
    <lineage>
        <taxon>Bacteria</taxon>
        <taxon>Pseudomonadati</taxon>
        <taxon>Pseudomonadota</taxon>
        <taxon>Gammaproteobacteria</taxon>
        <taxon>Enterobacterales</taxon>
        <taxon>Enterobacteriaceae</taxon>
        <taxon>Escherichia</taxon>
    </lineage>
</organism>